<name>VATA_STRPD</name>
<feature type="chain" id="PRO_1000059355" description="V-type ATP synthase alpha chain">
    <location>
        <begin position="1"/>
        <end position="591"/>
    </location>
</feature>
<feature type="binding site" evidence="1">
    <location>
        <begin position="233"/>
        <end position="240"/>
    </location>
    <ligand>
        <name>ATP</name>
        <dbReference type="ChEBI" id="CHEBI:30616"/>
    </ligand>
</feature>
<reference key="1">
    <citation type="journal article" date="2006" name="Proc. Natl. Acad. Sci. U.S.A.">
        <title>Molecular genetic anatomy of inter- and intraserotype variation in the human bacterial pathogen group A Streptococcus.</title>
        <authorList>
            <person name="Beres S.B."/>
            <person name="Richter E.W."/>
            <person name="Nagiec M.J."/>
            <person name="Sumby P."/>
            <person name="Porcella S.F."/>
            <person name="DeLeo F.R."/>
            <person name="Musser J.M."/>
        </authorList>
    </citation>
    <scope>NUCLEOTIDE SEQUENCE [LARGE SCALE GENOMIC DNA]</scope>
    <source>
        <strain>MGAS10270</strain>
    </source>
</reference>
<proteinExistence type="inferred from homology"/>
<sequence>MNQGKIITVSGPLVVASGMQEANIQDICRVGHLGLVGEIIEMRRDQASIQVYEETSGIGPGEPVVTTGCPLSVELGPGLISEMFDGIQRPLDRFQKATDSDFLIRGVAIPSLDRKAKWAFIPKLSVGQEVVAGDILGTVQETAVIEHRIMVPYKVSGTLVAIHAGDFTVTDTVYEIKQEDGSIYQGSLMQTWPVRQSRPVAQKLIPVEPLVTGQRVIDTFFPVTKGGAAAVPGPFGAGKTVVQHQIAKFANVDIVIYVGCGERGNEMTDVLNEFPELIDPNTGQSIMERTVLIANTSNMPVAAREASIYTGITIAEYFRDMGYSVAIMADSTSRWAEALREMSGRLQEMPGDEGYPAYLGSRIAEYYERAGRVRTLGSQEREGTITAIGAVSPPGGDISEPVTQNTLRIVKVFWGLDAPLAQRRHFPAINWLTSYSLYQDDVGSYIDRKQESNWSNKVTRAMAILQREASLEEIVRLVGLDSLSEQDRLTMAVARQIREDYLQQNAFDSVDTFTSFPKQEAMLTNILTFNEEASKALSLGAYFNEIMEGTAQVRDRIARSKFIPEENLEQIKGLTQKVTKEIHHVLAKGGI</sequence>
<gene>
    <name evidence="1" type="primary">atpA</name>
    <name type="ordered locus">MGAS10270_Spy0133</name>
</gene>
<protein>
    <recommendedName>
        <fullName evidence="1">V-type ATP synthase alpha chain</fullName>
        <ecNumber evidence="1">7.1.2.2</ecNumber>
    </recommendedName>
    <alternativeName>
        <fullName evidence="1">V-ATPase subunit A</fullName>
    </alternativeName>
</protein>
<dbReference type="EC" id="7.1.2.2" evidence="1"/>
<dbReference type="EMBL" id="CP000260">
    <property type="protein sequence ID" value="ABF33198.1"/>
    <property type="molecule type" value="Genomic_DNA"/>
</dbReference>
<dbReference type="SMR" id="Q1JIX5"/>
<dbReference type="KEGG" id="sph:MGAS10270_Spy0133"/>
<dbReference type="HOGENOM" id="CLU_008162_3_1_9"/>
<dbReference type="Proteomes" id="UP000002436">
    <property type="component" value="Chromosome"/>
</dbReference>
<dbReference type="GO" id="GO:0045259">
    <property type="term" value="C:proton-transporting ATP synthase complex"/>
    <property type="evidence" value="ECO:0007669"/>
    <property type="project" value="UniProtKB-ARBA"/>
</dbReference>
<dbReference type="GO" id="GO:0005524">
    <property type="term" value="F:ATP binding"/>
    <property type="evidence" value="ECO:0007669"/>
    <property type="project" value="UniProtKB-UniRule"/>
</dbReference>
<dbReference type="GO" id="GO:0046933">
    <property type="term" value="F:proton-transporting ATP synthase activity, rotational mechanism"/>
    <property type="evidence" value="ECO:0007669"/>
    <property type="project" value="UniProtKB-UniRule"/>
</dbReference>
<dbReference type="GO" id="GO:0046961">
    <property type="term" value="F:proton-transporting ATPase activity, rotational mechanism"/>
    <property type="evidence" value="ECO:0007669"/>
    <property type="project" value="InterPro"/>
</dbReference>
<dbReference type="GO" id="GO:0042777">
    <property type="term" value="P:proton motive force-driven plasma membrane ATP synthesis"/>
    <property type="evidence" value="ECO:0007669"/>
    <property type="project" value="UniProtKB-UniRule"/>
</dbReference>
<dbReference type="CDD" id="cd18111">
    <property type="entry name" value="ATP-synt_V_A-type_alpha_C"/>
    <property type="match status" value="1"/>
</dbReference>
<dbReference type="CDD" id="cd18119">
    <property type="entry name" value="ATP-synt_V_A-type_alpha_N"/>
    <property type="match status" value="1"/>
</dbReference>
<dbReference type="CDD" id="cd01134">
    <property type="entry name" value="V_A-ATPase_A"/>
    <property type="match status" value="1"/>
</dbReference>
<dbReference type="FunFam" id="3.40.50.300:FF:000675">
    <property type="entry name" value="V-type ATP synthase alpha chain"/>
    <property type="match status" value="1"/>
</dbReference>
<dbReference type="FunFam" id="2.40.30.20:FF:000002">
    <property type="entry name" value="V-type proton ATPase catalytic subunit A"/>
    <property type="match status" value="1"/>
</dbReference>
<dbReference type="FunFam" id="2.40.50.100:FF:000008">
    <property type="entry name" value="V-type proton ATPase catalytic subunit A"/>
    <property type="match status" value="1"/>
</dbReference>
<dbReference type="Gene3D" id="2.40.30.20">
    <property type="match status" value="1"/>
</dbReference>
<dbReference type="Gene3D" id="2.40.50.100">
    <property type="match status" value="1"/>
</dbReference>
<dbReference type="Gene3D" id="1.10.1140.10">
    <property type="entry name" value="Bovine Mitochondrial F1-atpase, Atp Synthase Beta Chain, Chain D, domain 3"/>
    <property type="match status" value="1"/>
</dbReference>
<dbReference type="Gene3D" id="3.40.50.300">
    <property type="entry name" value="P-loop containing nucleotide triphosphate hydrolases"/>
    <property type="match status" value="1"/>
</dbReference>
<dbReference type="HAMAP" id="MF_00309">
    <property type="entry name" value="ATP_synth_A_arch"/>
    <property type="match status" value="1"/>
</dbReference>
<dbReference type="InterPro" id="IPR055190">
    <property type="entry name" value="ATP-synt_VA_C"/>
</dbReference>
<dbReference type="InterPro" id="IPR031686">
    <property type="entry name" value="ATP-synth_a_Xtn"/>
</dbReference>
<dbReference type="InterPro" id="IPR023366">
    <property type="entry name" value="ATP_synth_asu-like_sf"/>
</dbReference>
<dbReference type="InterPro" id="IPR020003">
    <property type="entry name" value="ATPase_a/bsu_AS"/>
</dbReference>
<dbReference type="InterPro" id="IPR004100">
    <property type="entry name" value="ATPase_F1/V1/A1_a/bsu_N"/>
</dbReference>
<dbReference type="InterPro" id="IPR036121">
    <property type="entry name" value="ATPase_F1/V1/A1_a/bsu_N_sf"/>
</dbReference>
<dbReference type="InterPro" id="IPR000194">
    <property type="entry name" value="ATPase_F1/V1/A1_a/bsu_nucl-bd"/>
</dbReference>
<dbReference type="InterPro" id="IPR024034">
    <property type="entry name" value="ATPase_F1/V1_b/a_C"/>
</dbReference>
<dbReference type="InterPro" id="IPR027417">
    <property type="entry name" value="P-loop_NTPase"/>
</dbReference>
<dbReference type="InterPro" id="IPR022878">
    <property type="entry name" value="V-ATPase_asu"/>
</dbReference>
<dbReference type="NCBIfam" id="NF003220">
    <property type="entry name" value="PRK04192.1"/>
    <property type="match status" value="1"/>
</dbReference>
<dbReference type="PANTHER" id="PTHR43607:SF1">
    <property type="entry name" value="H(+)-TRANSPORTING TWO-SECTOR ATPASE"/>
    <property type="match status" value="1"/>
</dbReference>
<dbReference type="PANTHER" id="PTHR43607">
    <property type="entry name" value="V-TYPE PROTON ATPASE CATALYTIC SUBUNIT A"/>
    <property type="match status" value="1"/>
</dbReference>
<dbReference type="Pfam" id="PF00006">
    <property type="entry name" value="ATP-synt_ab"/>
    <property type="match status" value="1"/>
</dbReference>
<dbReference type="Pfam" id="PF02874">
    <property type="entry name" value="ATP-synt_ab_N"/>
    <property type="match status" value="1"/>
</dbReference>
<dbReference type="Pfam" id="PF16886">
    <property type="entry name" value="ATP-synt_ab_Xtn"/>
    <property type="match status" value="1"/>
</dbReference>
<dbReference type="Pfam" id="PF22919">
    <property type="entry name" value="ATP-synt_VA_C"/>
    <property type="match status" value="1"/>
</dbReference>
<dbReference type="SUPFAM" id="SSF47917">
    <property type="entry name" value="C-terminal domain of alpha and beta subunits of F1 ATP synthase"/>
    <property type="match status" value="1"/>
</dbReference>
<dbReference type="SUPFAM" id="SSF50615">
    <property type="entry name" value="N-terminal domain of alpha and beta subunits of F1 ATP synthase"/>
    <property type="match status" value="1"/>
</dbReference>
<dbReference type="SUPFAM" id="SSF52540">
    <property type="entry name" value="P-loop containing nucleoside triphosphate hydrolases"/>
    <property type="match status" value="1"/>
</dbReference>
<dbReference type="PROSITE" id="PS00152">
    <property type="entry name" value="ATPASE_ALPHA_BETA"/>
    <property type="match status" value="1"/>
</dbReference>
<comment type="function">
    <text evidence="1">Produces ATP from ADP in the presence of a proton gradient across the membrane. The V-type alpha chain is a catalytic subunit.</text>
</comment>
<comment type="catalytic activity">
    <reaction evidence="1">
        <text>ATP + H2O + 4 H(+)(in) = ADP + phosphate + 5 H(+)(out)</text>
        <dbReference type="Rhea" id="RHEA:57720"/>
        <dbReference type="ChEBI" id="CHEBI:15377"/>
        <dbReference type="ChEBI" id="CHEBI:15378"/>
        <dbReference type="ChEBI" id="CHEBI:30616"/>
        <dbReference type="ChEBI" id="CHEBI:43474"/>
        <dbReference type="ChEBI" id="CHEBI:456216"/>
        <dbReference type="EC" id="7.1.2.2"/>
    </reaction>
</comment>
<comment type="similarity">
    <text evidence="1">Belongs to the ATPase alpha/beta chains family.</text>
</comment>
<organism>
    <name type="scientific">Streptococcus pyogenes serotype M2 (strain MGAS10270)</name>
    <dbReference type="NCBI Taxonomy" id="370552"/>
    <lineage>
        <taxon>Bacteria</taxon>
        <taxon>Bacillati</taxon>
        <taxon>Bacillota</taxon>
        <taxon>Bacilli</taxon>
        <taxon>Lactobacillales</taxon>
        <taxon>Streptococcaceae</taxon>
        <taxon>Streptococcus</taxon>
    </lineage>
</organism>
<evidence type="ECO:0000255" key="1">
    <source>
        <dbReference type="HAMAP-Rule" id="MF_00309"/>
    </source>
</evidence>
<keyword id="KW-0066">ATP synthesis</keyword>
<keyword id="KW-0067">ATP-binding</keyword>
<keyword id="KW-0375">Hydrogen ion transport</keyword>
<keyword id="KW-0406">Ion transport</keyword>
<keyword id="KW-0547">Nucleotide-binding</keyword>
<keyword id="KW-1278">Translocase</keyword>
<keyword id="KW-0813">Transport</keyword>
<accession>Q1JIX5</accession>